<name>BRK3_PHYSG</name>
<protein>
    <recommendedName>
        <fullName evidence="3">[Ala1,Thr6]-bradykinyl-Ser</fullName>
    </recommendedName>
</protein>
<dbReference type="GO" id="GO:0005576">
    <property type="term" value="C:extracellular region"/>
    <property type="evidence" value="ECO:0007669"/>
    <property type="project" value="UniProtKB-SubCell"/>
</dbReference>
<dbReference type="GO" id="GO:0090729">
    <property type="term" value="F:toxin activity"/>
    <property type="evidence" value="ECO:0007669"/>
    <property type="project" value="UniProtKB-KW"/>
</dbReference>
<dbReference type="GO" id="GO:0006952">
    <property type="term" value="P:defense response"/>
    <property type="evidence" value="ECO:0007669"/>
    <property type="project" value="UniProtKB-KW"/>
</dbReference>
<dbReference type="GO" id="GO:0042311">
    <property type="term" value="P:vasodilation"/>
    <property type="evidence" value="ECO:0007669"/>
    <property type="project" value="UniProtKB-KW"/>
</dbReference>
<proteinExistence type="evidence at protein level"/>
<sequence>APPGFTPFRS</sequence>
<evidence type="ECO:0000250" key="1"/>
<evidence type="ECO:0000269" key="2">
    <source ref="1"/>
</evidence>
<evidence type="ECO:0000303" key="3">
    <source ref="1"/>
</evidence>
<evidence type="ECO:0000305" key="4"/>
<keyword id="KW-0878">Amphibian defense peptide</keyword>
<keyword id="KW-0903">Direct protein sequencing</keyword>
<keyword id="KW-1213">G-protein coupled receptor impairing toxin</keyword>
<keyword id="KW-0964">Secreted</keyword>
<keyword id="KW-0800">Toxin</keyword>
<keyword id="KW-0838">Vasoactive</keyword>
<keyword id="KW-0840">Vasodilator</keyword>
<organism>
    <name type="scientific">Physalaemus signifer</name>
    <name type="common">Girard's dwarf frog</name>
    <dbReference type="NCBI Taxonomy" id="364768"/>
    <lineage>
        <taxon>Eukaryota</taxon>
        <taxon>Metazoa</taxon>
        <taxon>Chordata</taxon>
        <taxon>Craniata</taxon>
        <taxon>Vertebrata</taxon>
        <taxon>Euteleostomi</taxon>
        <taxon>Amphibia</taxon>
        <taxon>Batrachia</taxon>
        <taxon>Anura</taxon>
        <taxon>Neobatrachia</taxon>
        <taxon>Hyloidea</taxon>
        <taxon>Leptodactylidae</taxon>
        <taxon>Leiuperinae</taxon>
        <taxon>Physalaemus</taxon>
    </lineage>
</organism>
<feature type="peptide" id="PRO_0000404688" description="[Ala1,Thr6]-bradykinyl-Ser" evidence="2">
    <location>
        <begin position="1"/>
        <end position="10"/>
    </location>
</feature>
<reference evidence="4" key="1">
    <citation type="submission" date="2010-09" db="UniProtKB">
        <title>Bradykinin-related peptides in skin secretion of Physalaemus signifer (Girard, 1853) (Anura, Leiuperidae).</title>
        <authorList>
            <person name="Rates B."/>
            <person name="Ireno I.C."/>
            <person name="Canelas M.A."/>
            <person name="de Lima M.E."/>
            <person name="Pimenta A.M.C."/>
        </authorList>
    </citation>
    <scope>PROTEIN SEQUENCE</scope>
    <scope>SUBCELLULAR LOCATION</scope>
    <scope>TISSUE SPECIFICITY</scope>
    <source>
        <tissue evidence="2">Skin secretion</tissue>
    </source>
</reference>
<comment type="function">
    <text evidence="1">Produces in vitro relaxation of rat arterial smooth muscle and constriction of intestinal smooth muscle (By similarity). May target bradykinin receptors (BDKRB).</text>
</comment>
<comment type="subcellular location">
    <subcellularLocation>
        <location evidence="2">Secreted</location>
    </subcellularLocation>
</comment>
<comment type="tissue specificity">
    <text evidence="2">Expressed by the skin glands.</text>
</comment>
<comment type="similarity">
    <text evidence="4">Belongs to the bradykinin-related peptide family.</text>
</comment>
<accession>P86813</accession>